<accession>P9WG85</accession>
<accession>L0T853</accession>
<accession>O07753</accession>
<accession>Q7D7V2</accession>
<protein>
    <recommendedName>
        <fullName>Uncharacterized MFS-type transporter Rv1877</fullName>
    </recommendedName>
</protein>
<comment type="subcellular location">
    <subcellularLocation>
        <location evidence="2">Cell membrane</location>
        <topology evidence="2">Multi-pass membrane protein</topology>
    </subcellularLocation>
</comment>
<comment type="similarity">
    <text evidence="2">Belongs to the major facilitator superfamily. TCR/Tet family.</text>
</comment>
<feature type="chain" id="PRO_0000390887" description="Uncharacterized MFS-type transporter Rv1877">
    <location>
        <begin position="1"/>
        <end position="687"/>
    </location>
</feature>
<feature type="transmembrane region" description="Helical" evidence="1">
    <location>
        <begin position="28"/>
        <end position="48"/>
    </location>
</feature>
<feature type="transmembrane region" description="Helical" evidence="1">
    <location>
        <begin position="66"/>
        <end position="86"/>
    </location>
</feature>
<feature type="transmembrane region" description="Helical" evidence="1">
    <location>
        <begin position="94"/>
        <end position="114"/>
    </location>
</feature>
<feature type="transmembrane region" description="Helical" evidence="1">
    <location>
        <begin position="126"/>
        <end position="146"/>
    </location>
</feature>
<feature type="transmembrane region" description="Helical" evidence="1">
    <location>
        <begin position="154"/>
        <end position="174"/>
    </location>
</feature>
<feature type="transmembrane region" description="Helical" evidence="1">
    <location>
        <begin position="182"/>
        <end position="202"/>
    </location>
</feature>
<feature type="transmembrane region" description="Helical" evidence="1">
    <location>
        <begin position="211"/>
        <end position="231"/>
    </location>
</feature>
<feature type="transmembrane region" description="Helical" evidence="1">
    <location>
        <begin position="243"/>
        <end position="263"/>
    </location>
</feature>
<feature type="transmembrane region" description="Helical" evidence="1">
    <location>
        <begin position="287"/>
        <end position="307"/>
    </location>
</feature>
<feature type="transmembrane region" description="Helical" evidence="1">
    <location>
        <begin position="320"/>
        <end position="340"/>
    </location>
</feature>
<feature type="transmembrane region" description="Helical" evidence="1">
    <location>
        <begin position="348"/>
        <end position="368"/>
    </location>
</feature>
<feature type="transmembrane region" description="Helical" evidence="1">
    <location>
        <begin position="378"/>
        <end position="398"/>
    </location>
</feature>
<feature type="transmembrane region" description="Helical" evidence="1">
    <location>
        <begin position="414"/>
        <end position="434"/>
    </location>
</feature>
<feature type="transmembrane region" description="Helical" evidence="1">
    <location>
        <begin position="480"/>
        <end position="500"/>
    </location>
</feature>
<reference key="1">
    <citation type="journal article" date="1998" name="Nature">
        <title>Deciphering the biology of Mycobacterium tuberculosis from the complete genome sequence.</title>
        <authorList>
            <person name="Cole S.T."/>
            <person name="Brosch R."/>
            <person name="Parkhill J."/>
            <person name="Garnier T."/>
            <person name="Churcher C.M."/>
            <person name="Harris D.E."/>
            <person name="Gordon S.V."/>
            <person name="Eiglmeier K."/>
            <person name="Gas S."/>
            <person name="Barry C.E. III"/>
            <person name="Tekaia F."/>
            <person name="Badcock K."/>
            <person name="Basham D."/>
            <person name="Brown D."/>
            <person name="Chillingworth T."/>
            <person name="Connor R."/>
            <person name="Davies R.M."/>
            <person name="Devlin K."/>
            <person name="Feltwell T."/>
            <person name="Gentles S."/>
            <person name="Hamlin N."/>
            <person name="Holroyd S."/>
            <person name="Hornsby T."/>
            <person name="Jagels K."/>
            <person name="Krogh A."/>
            <person name="McLean J."/>
            <person name="Moule S."/>
            <person name="Murphy L.D."/>
            <person name="Oliver S."/>
            <person name="Osborne J."/>
            <person name="Quail M.A."/>
            <person name="Rajandream M.A."/>
            <person name="Rogers J."/>
            <person name="Rutter S."/>
            <person name="Seeger K."/>
            <person name="Skelton S."/>
            <person name="Squares S."/>
            <person name="Squares R."/>
            <person name="Sulston J.E."/>
            <person name="Taylor K."/>
            <person name="Whitehead S."/>
            <person name="Barrell B.G."/>
        </authorList>
    </citation>
    <scope>NUCLEOTIDE SEQUENCE [LARGE SCALE GENOMIC DNA]</scope>
    <source>
        <strain>ATCC 25618 / H37Rv</strain>
    </source>
</reference>
<gene>
    <name type="ordered locus">Rv1877</name>
</gene>
<dbReference type="EMBL" id="AL123456">
    <property type="protein sequence ID" value="CCP44643.1"/>
    <property type="molecule type" value="Genomic_DNA"/>
</dbReference>
<dbReference type="PIR" id="B70515">
    <property type="entry name" value="B70515"/>
</dbReference>
<dbReference type="RefSeq" id="NP_216393.1">
    <property type="nucleotide sequence ID" value="NC_000962.3"/>
</dbReference>
<dbReference type="RefSeq" id="WP_003899060.1">
    <property type="nucleotide sequence ID" value="NZ_NVQJ01000013.1"/>
</dbReference>
<dbReference type="SMR" id="P9WG85"/>
<dbReference type="FunCoup" id="P9WG85">
    <property type="interactions" value="96"/>
</dbReference>
<dbReference type="STRING" id="83332.Rv1877"/>
<dbReference type="CARD" id="ARO:3007662">
    <property type="molecule name" value="Rv1877"/>
    <property type="mechanism identifier" value="ARO:0010000"/>
    <property type="mechanism name" value="antibiotic efflux"/>
</dbReference>
<dbReference type="PaxDb" id="83332-Rv1877"/>
<dbReference type="DNASU" id="885654"/>
<dbReference type="GeneID" id="885654"/>
<dbReference type="KEGG" id="mtu:Rv1877"/>
<dbReference type="KEGG" id="mtv:RVBD_1877"/>
<dbReference type="TubercuList" id="Rv1877"/>
<dbReference type="eggNOG" id="COG0477">
    <property type="taxonomic scope" value="Bacteria"/>
</dbReference>
<dbReference type="eggNOG" id="COG1846">
    <property type="taxonomic scope" value="Bacteria"/>
</dbReference>
<dbReference type="InParanoid" id="P9WG85"/>
<dbReference type="OrthoDB" id="7375466at2"/>
<dbReference type="PhylomeDB" id="P9WG85"/>
<dbReference type="Proteomes" id="UP000001584">
    <property type="component" value="Chromosome"/>
</dbReference>
<dbReference type="GO" id="GO:0005886">
    <property type="term" value="C:plasma membrane"/>
    <property type="evidence" value="ECO:0000318"/>
    <property type="project" value="GO_Central"/>
</dbReference>
<dbReference type="GO" id="GO:0022857">
    <property type="term" value="F:transmembrane transporter activity"/>
    <property type="evidence" value="ECO:0000318"/>
    <property type="project" value="GO_Central"/>
</dbReference>
<dbReference type="GO" id="GO:0055085">
    <property type="term" value="P:transmembrane transport"/>
    <property type="evidence" value="ECO:0000318"/>
    <property type="project" value="GO_Central"/>
</dbReference>
<dbReference type="CDD" id="cd17502">
    <property type="entry name" value="MFS_Azr1_MDR_like"/>
    <property type="match status" value="1"/>
</dbReference>
<dbReference type="FunFam" id="1.20.1720.10:FF:000004">
    <property type="entry name" value="EmrB/QacA family drug resistance transporter"/>
    <property type="match status" value="1"/>
</dbReference>
<dbReference type="Gene3D" id="1.20.1250.20">
    <property type="entry name" value="MFS general substrate transporter like domains"/>
    <property type="match status" value="1"/>
</dbReference>
<dbReference type="Gene3D" id="1.20.1720.10">
    <property type="entry name" value="Multidrug resistance protein D"/>
    <property type="match status" value="1"/>
</dbReference>
<dbReference type="InterPro" id="IPR011701">
    <property type="entry name" value="MFS"/>
</dbReference>
<dbReference type="InterPro" id="IPR020846">
    <property type="entry name" value="MFS_dom"/>
</dbReference>
<dbReference type="InterPro" id="IPR036259">
    <property type="entry name" value="MFS_trans_sf"/>
</dbReference>
<dbReference type="InterPro" id="IPR005829">
    <property type="entry name" value="Sugar_transporter_CS"/>
</dbReference>
<dbReference type="InterPro" id="IPR001958">
    <property type="entry name" value="Tet-R_TetA/multi-R_MdtG-like"/>
</dbReference>
<dbReference type="InterPro" id="IPR036390">
    <property type="entry name" value="WH_DNA-bd_sf"/>
</dbReference>
<dbReference type="PANTHER" id="PTHR23501:SF197">
    <property type="entry name" value="COMD"/>
    <property type="match status" value="1"/>
</dbReference>
<dbReference type="PANTHER" id="PTHR23501">
    <property type="entry name" value="MAJOR FACILITATOR SUPERFAMILY"/>
    <property type="match status" value="1"/>
</dbReference>
<dbReference type="Pfam" id="PF07690">
    <property type="entry name" value="MFS_1"/>
    <property type="match status" value="1"/>
</dbReference>
<dbReference type="PRINTS" id="PR01035">
    <property type="entry name" value="TCRTETA"/>
</dbReference>
<dbReference type="SUPFAM" id="SSF103473">
    <property type="entry name" value="MFS general substrate transporter"/>
    <property type="match status" value="1"/>
</dbReference>
<dbReference type="SUPFAM" id="SSF46785">
    <property type="entry name" value="Winged helix' DNA-binding domain"/>
    <property type="match status" value="1"/>
</dbReference>
<dbReference type="PROSITE" id="PS50850">
    <property type="entry name" value="MFS"/>
    <property type="match status" value="1"/>
</dbReference>
<dbReference type="PROSITE" id="PS00217">
    <property type="entry name" value="SUGAR_TRANSPORT_2"/>
    <property type="match status" value="1"/>
</dbReference>
<proteinExistence type="inferred from homology"/>
<organism>
    <name type="scientific">Mycobacterium tuberculosis (strain ATCC 25618 / H37Rv)</name>
    <dbReference type="NCBI Taxonomy" id="83332"/>
    <lineage>
        <taxon>Bacteria</taxon>
        <taxon>Bacillati</taxon>
        <taxon>Actinomycetota</taxon>
        <taxon>Actinomycetes</taxon>
        <taxon>Mycobacteriales</taxon>
        <taxon>Mycobacteriaceae</taxon>
        <taxon>Mycobacterium</taxon>
        <taxon>Mycobacterium tuberculosis complex</taxon>
    </lineage>
</organism>
<sequence length="687" mass="72354">MAGPTAPTTAPTAIRAGGPLLSPVRRNIIFTALVFGVLVAATGQTIVVPALPTIVAELGSTVDQSWAVTSYLLGGTVVVVVAGKLGDLLGRNRVLLGSVVVFVVGSVLCGLSQTMTMLAISRALQGVGAGAISVTAYALAAEVVPLRDRGRYQGVLGAVFGVNTVTGPLLGGWLTDYLSWRWAFWINVPVSIAVLTVAATAVPALARPPKPVIDYLGILVIAVATTALIMATSWGGTTYAWGSATIVGLLIGAAVALGFFVWLEGRAAAAILPPRLFGSPVFAVCCVLSFVVGFAMLGALTFVPIYLGYVDGASATASGLRTLPMVIGLLIASTGTGVLVGRTGRYKIFPVAGMALMAVAFLLMSQMDEWTPPLLQSLYLVVLGAGIGLSMQVLVLIVQNTSSFEDLGVATSGVTFFRVVGASFGTATFGALFVNFLDRRLGSALTSGAVPVPAVPSPAVLHQLPQSMAAPIVRAYAESLTQVFLCAVSVTVVGFILALLLREVPLTDIHDDADDLGDGFGVPRAESPEDVLEIAVRRMLPNGVRLRDIATQPGCGLGVAELWALLRIYQYQRLFEAVRLTDIGRHLHVPYQVFEPVFDRLVQTGYAARDGDILTLTPSGHRQVDSLAVLIRQWLLDHLAVAPGLKRQPDHQFEAALQHVTDAVLVQRDWYEDLGDLSESRQLAATT</sequence>
<name>Y1877_MYCTU</name>
<keyword id="KW-1003">Cell membrane</keyword>
<keyword id="KW-0472">Membrane</keyword>
<keyword id="KW-1185">Reference proteome</keyword>
<keyword id="KW-0812">Transmembrane</keyword>
<keyword id="KW-1133">Transmembrane helix</keyword>
<keyword id="KW-0813">Transport</keyword>
<evidence type="ECO:0000255" key="1"/>
<evidence type="ECO:0000305" key="2"/>